<gene>
    <name evidence="2" type="primary">infB</name>
    <name type="ordered locus">BG0827</name>
</gene>
<protein>
    <recommendedName>
        <fullName evidence="2">Translation initiation factor IF-2</fullName>
    </recommendedName>
</protein>
<sequence>MSENIDDIKNEDSKKIKIIKLRKKVVKIVTHNDLNGKNNSNSSINLDKHNNKVEYSQNRDNRAGGYSQNRDNRTGGYSQNRDNRTGGYSQNRDNRTGGYSQNRDNRTGGYSQNRDNRTGGYSQNRDNRTGGYSQNRDNRTGGYSQNRDNRTGGYSQNRDNRTGGYSQNRDNRTGGYSQNRDNRTGGYSQNRDSFPSQYQVSTKKTYVGKNTSQNKYTTTPMSFRRVIKAKVPSIVSSASSVDSENIKELNRKLGEKKKQQQESQKSYKRKKAETESKTIEQKVFEQLQKKKRENLANPIPKSIDIMGSITVSDLARKMNLKSSDLIAKLMALGVMVTINEKIDSDTATILVEEYGSKVNVVSIYDETFIEEEVEDQSKRIEKPPVITIMGHVDHGKTKLLSVLQNIDINQTESGGITQHIGAYTIVYNGREITFLDTPGHEAFTMMRSRGAQVTDIVVLVVSAIDGVMPQTIEAINHAKEANVPIIVAINKIDLPDSNPDKVKHQLSEYDLVPEDWGGDTIFVLISALKNIGISELLDMILLQSDMMLLKANPSKRAIGKVLDAKIDLGRGIVCSVIIEDGTLYIGDSFVGGVCYGKVKALISDKGVSVKSVGPAKAISVLGFSSMPQAGDPFQVTKTEKEAKLISSKRQDLKKYESSKNVKKVTMLNLYDSIKEGALKELKIILKADVQGSVEALKNSLEKLTNDEVRVRVVHSSAGVITETDISFASASDAIVIGFHVRPTSKAQILADQEKVEIRKYNVIYDAISDVKSVLEGMLEPDVEQQFIGFAEVRAVINVPKVGVIAGCYVSRGIIKRDAITNVMRDGLQIHSGKISSLKRFKDDVKEVAEQYECGIMIDNYANIKEGDIIEAFEVKKIKKTFKT</sequence>
<feature type="chain" id="PRO_0000228174" description="Translation initiation factor IF-2">
    <location>
        <begin position="1"/>
        <end position="883"/>
    </location>
</feature>
<feature type="domain" description="tr-type G">
    <location>
        <begin position="381"/>
        <end position="554"/>
    </location>
</feature>
<feature type="region of interest" description="Disordered" evidence="3">
    <location>
        <begin position="32"/>
        <end position="216"/>
    </location>
</feature>
<feature type="region of interest" description="Disordered" evidence="3">
    <location>
        <begin position="251"/>
        <end position="275"/>
    </location>
</feature>
<feature type="region of interest" description="G1" evidence="1">
    <location>
        <begin position="390"/>
        <end position="397"/>
    </location>
</feature>
<feature type="region of interest" description="G2" evidence="1">
    <location>
        <begin position="415"/>
        <end position="419"/>
    </location>
</feature>
<feature type="region of interest" description="G3" evidence="1">
    <location>
        <begin position="436"/>
        <end position="439"/>
    </location>
</feature>
<feature type="region of interest" description="G4" evidence="1">
    <location>
        <begin position="490"/>
        <end position="493"/>
    </location>
</feature>
<feature type="region of interest" description="G5" evidence="1">
    <location>
        <begin position="526"/>
        <end position="528"/>
    </location>
</feature>
<feature type="compositionally biased region" description="Polar residues" evidence="3">
    <location>
        <begin position="32"/>
        <end position="45"/>
    </location>
</feature>
<feature type="compositionally biased region" description="Basic and acidic residues" evidence="3">
    <location>
        <begin position="46"/>
        <end position="62"/>
    </location>
</feature>
<feature type="compositionally biased region" description="Polar residues" evidence="3">
    <location>
        <begin position="75"/>
        <end position="216"/>
    </location>
</feature>
<feature type="compositionally biased region" description="Basic and acidic residues" evidence="3">
    <location>
        <begin position="251"/>
        <end position="260"/>
    </location>
</feature>
<feature type="binding site" evidence="2">
    <location>
        <begin position="390"/>
        <end position="397"/>
    </location>
    <ligand>
        <name>GTP</name>
        <dbReference type="ChEBI" id="CHEBI:37565"/>
    </ligand>
</feature>
<feature type="binding site" evidence="2">
    <location>
        <begin position="436"/>
        <end position="440"/>
    </location>
    <ligand>
        <name>GTP</name>
        <dbReference type="ChEBI" id="CHEBI:37565"/>
    </ligand>
</feature>
<feature type="binding site" evidence="2">
    <location>
        <begin position="490"/>
        <end position="493"/>
    </location>
    <ligand>
        <name>GTP</name>
        <dbReference type="ChEBI" id="CHEBI:37565"/>
    </ligand>
</feature>
<accession>Q65ZX2</accession>
<reference key="1">
    <citation type="journal article" date="2004" name="Nucleic Acids Res.">
        <title>Comparative analysis of the Borrelia garinii genome.</title>
        <authorList>
            <person name="Gloeckner G."/>
            <person name="Lehmann R."/>
            <person name="Romualdi A."/>
            <person name="Pradella S."/>
            <person name="Schulte-Spechtel U."/>
            <person name="Schilhabel M."/>
            <person name="Wilske B."/>
            <person name="Suehnel J."/>
            <person name="Platzer M."/>
        </authorList>
    </citation>
    <scope>NUCLEOTIDE SEQUENCE [LARGE SCALE GENOMIC DNA]</scope>
    <source>
        <strain>ATCC BAA-2496 / DSM 23469 / PBi</strain>
    </source>
</reference>
<dbReference type="EMBL" id="CP000013">
    <property type="protein sequence ID" value="AAU07649.1"/>
    <property type="molecule type" value="Genomic_DNA"/>
</dbReference>
<dbReference type="RefSeq" id="WP_011194094.1">
    <property type="nucleotide sequence ID" value="NC_006156.1"/>
</dbReference>
<dbReference type="SMR" id="Q65ZX2"/>
<dbReference type="GeneID" id="45161601"/>
<dbReference type="KEGG" id="bga:BG0827"/>
<dbReference type="eggNOG" id="COG0532">
    <property type="taxonomic scope" value="Bacteria"/>
</dbReference>
<dbReference type="HOGENOM" id="CLU_006301_1_1_12"/>
<dbReference type="OrthoDB" id="9811804at2"/>
<dbReference type="Proteomes" id="UP000002276">
    <property type="component" value="Chromosome"/>
</dbReference>
<dbReference type="GO" id="GO:0005829">
    <property type="term" value="C:cytosol"/>
    <property type="evidence" value="ECO:0007669"/>
    <property type="project" value="TreeGrafter"/>
</dbReference>
<dbReference type="GO" id="GO:0005525">
    <property type="term" value="F:GTP binding"/>
    <property type="evidence" value="ECO:0007669"/>
    <property type="project" value="UniProtKB-KW"/>
</dbReference>
<dbReference type="GO" id="GO:0003924">
    <property type="term" value="F:GTPase activity"/>
    <property type="evidence" value="ECO:0007669"/>
    <property type="project" value="UniProtKB-UniRule"/>
</dbReference>
<dbReference type="GO" id="GO:0003743">
    <property type="term" value="F:translation initiation factor activity"/>
    <property type="evidence" value="ECO:0007669"/>
    <property type="project" value="UniProtKB-UniRule"/>
</dbReference>
<dbReference type="CDD" id="cd01887">
    <property type="entry name" value="IF2_eIF5B"/>
    <property type="match status" value="1"/>
</dbReference>
<dbReference type="CDD" id="cd03702">
    <property type="entry name" value="IF2_mtIF2_II"/>
    <property type="match status" value="1"/>
</dbReference>
<dbReference type="CDD" id="cd03692">
    <property type="entry name" value="mtIF2_IVc"/>
    <property type="match status" value="1"/>
</dbReference>
<dbReference type="FunFam" id="2.40.30.10:FF:000008">
    <property type="entry name" value="Translation initiation factor IF-2"/>
    <property type="match status" value="1"/>
</dbReference>
<dbReference type="FunFam" id="3.40.50.10050:FF:000001">
    <property type="entry name" value="Translation initiation factor IF-2"/>
    <property type="match status" value="1"/>
</dbReference>
<dbReference type="FunFam" id="3.40.50.300:FF:000019">
    <property type="entry name" value="Translation initiation factor IF-2"/>
    <property type="match status" value="1"/>
</dbReference>
<dbReference type="Gene3D" id="3.40.50.300">
    <property type="entry name" value="P-loop containing nucleotide triphosphate hydrolases"/>
    <property type="match status" value="1"/>
</dbReference>
<dbReference type="Gene3D" id="2.40.30.10">
    <property type="entry name" value="Translation factors"/>
    <property type="match status" value="2"/>
</dbReference>
<dbReference type="Gene3D" id="3.40.50.10050">
    <property type="entry name" value="Translation initiation factor IF- 2, domain 3"/>
    <property type="match status" value="1"/>
</dbReference>
<dbReference type="HAMAP" id="MF_00100_B">
    <property type="entry name" value="IF_2_B"/>
    <property type="match status" value="1"/>
</dbReference>
<dbReference type="InterPro" id="IPR053905">
    <property type="entry name" value="EF-G-like_DII"/>
</dbReference>
<dbReference type="InterPro" id="IPR044145">
    <property type="entry name" value="IF2_II"/>
</dbReference>
<dbReference type="InterPro" id="IPR006847">
    <property type="entry name" value="IF2_N"/>
</dbReference>
<dbReference type="InterPro" id="IPR027417">
    <property type="entry name" value="P-loop_NTPase"/>
</dbReference>
<dbReference type="InterPro" id="IPR005225">
    <property type="entry name" value="Small_GTP-bd"/>
</dbReference>
<dbReference type="InterPro" id="IPR000795">
    <property type="entry name" value="T_Tr_GTP-bd_dom"/>
</dbReference>
<dbReference type="InterPro" id="IPR000178">
    <property type="entry name" value="TF_IF2_bacterial-like"/>
</dbReference>
<dbReference type="InterPro" id="IPR015760">
    <property type="entry name" value="TIF_IF2"/>
</dbReference>
<dbReference type="InterPro" id="IPR023115">
    <property type="entry name" value="TIF_IF2_dom3"/>
</dbReference>
<dbReference type="InterPro" id="IPR036925">
    <property type="entry name" value="TIF_IF2_dom3_sf"/>
</dbReference>
<dbReference type="InterPro" id="IPR009000">
    <property type="entry name" value="Transl_B-barrel_sf"/>
</dbReference>
<dbReference type="NCBIfam" id="TIGR00487">
    <property type="entry name" value="IF-2"/>
    <property type="match status" value="1"/>
</dbReference>
<dbReference type="NCBIfam" id="TIGR00231">
    <property type="entry name" value="small_GTP"/>
    <property type="match status" value="1"/>
</dbReference>
<dbReference type="PANTHER" id="PTHR43381:SF5">
    <property type="entry name" value="TR-TYPE G DOMAIN-CONTAINING PROTEIN"/>
    <property type="match status" value="1"/>
</dbReference>
<dbReference type="PANTHER" id="PTHR43381">
    <property type="entry name" value="TRANSLATION INITIATION FACTOR IF-2-RELATED"/>
    <property type="match status" value="1"/>
</dbReference>
<dbReference type="Pfam" id="PF22042">
    <property type="entry name" value="EF-G_D2"/>
    <property type="match status" value="1"/>
</dbReference>
<dbReference type="Pfam" id="PF00009">
    <property type="entry name" value="GTP_EFTU"/>
    <property type="match status" value="1"/>
</dbReference>
<dbReference type="Pfam" id="PF11987">
    <property type="entry name" value="IF-2"/>
    <property type="match status" value="1"/>
</dbReference>
<dbReference type="Pfam" id="PF04760">
    <property type="entry name" value="IF2_N"/>
    <property type="match status" value="1"/>
</dbReference>
<dbReference type="SUPFAM" id="SSF52156">
    <property type="entry name" value="Initiation factor IF2/eIF5b, domain 3"/>
    <property type="match status" value="1"/>
</dbReference>
<dbReference type="SUPFAM" id="SSF52540">
    <property type="entry name" value="P-loop containing nucleoside triphosphate hydrolases"/>
    <property type="match status" value="1"/>
</dbReference>
<dbReference type="SUPFAM" id="SSF50447">
    <property type="entry name" value="Translation proteins"/>
    <property type="match status" value="2"/>
</dbReference>
<dbReference type="PROSITE" id="PS51722">
    <property type="entry name" value="G_TR_2"/>
    <property type="match status" value="1"/>
</dbReference>
<keyword id="KW-0963">Cytoplasm</keyword>
<keyword id="KW-0342">GTP-binding</keyword>
<keyword id="KW-0396">Initiation factor</keyword>
<keyword id="KW-0547">Nucleotide-binding</keyword>
<keyword id="KW-0648">Protein biosynthesis</keyword>
<comment type="function">
    <text evidence="2">One of the essential components for the initiation of protein synthesis. Protects formylmethionyl-tRNA from spontaneous hydrolysis and promotes its binding to the 30S ribosomal subunits. Also involved in the hydrolysis of GTP during the formation of the 70S ribosomal complex.</text>
</comment>
<comment type="subcellular location">
    <subcellularLocation>
        <location evidence="2">Cytoplasm</location>
    </subcellularLocation>
</comment>
<comment type="similarity">
    <text evidence="2">Belongs to the TRAFAC class translation factor GTPase superfamily. Classic translation factor GTPase family. IF-2 subfamily.</text>
</comment>
<organism>
    <name type="scientific">Borrelia garinii subsp. bavariensis (strain ATCC BAA-2496 / DSM 23469 / PBi)</name>
    <name type="common">Borreliella bavariensis</name>
    <dbReference type="NCBI Taxonomy" id="290434"/>
    <lineage>
        <taxon>Bacteria</taxon>
        <taxon>Pseudomonadati</taxon>
        <taxon>Spirochaetota</taxon>
        <taxon>Spirochaetia</taxon>
        <taxon>Spirochaetales</taxon>
        <taxon>Borreliaceae</taxon>
        <taxon>Borreliella</taxon>
    </lineage>
</organism>
<evidence type="ECO:0000250" key="1"/>
<evidence type="ECO:0000255" key="2">
    <source>
        <dbReference type="HAMAP-Rule" id="MF_00100"/>
    </source>
</evidence>
<evidence type="ECO:0000256" key="3">
    <source>
        <dbReference type="SAM" id="MobiDB-lite"/>
    </source>
</evidence>
<proteinExistence type="inferred from homology"/>
<name>IF2_BORGP</name>